<evidence type="ECO:0000255" key="1">
    <source>
        <dbReference type="HAMAP-Rule" id="MF_03111"/>
    </source>
</evidence>
<organism>
    <name type="scientific">Aspergillus oryzae (strain ATCC 42149 / RIB 40)</name>
    <name type="common">Yellow koji mold</name>
    <dbReference type="NCBI Taxonomy" id="510516"/>
    <lineage>
        <taxon>Eukaryota</taxon>
        <taxon>Fungi</taxon>
        <taxon>Dikarya</taxon>
        <taxon>Ascomycota</taxon>
        <taxon>Pezizomycotina</taxon>
        <taxon>Eurotiomycetes</taxon>
        <taxon>Eurotiomycetidae</taxon>
        <taxon>Eurotiales</taxon>
        <taxon>Aspergillaceae</taxon>
        <taxon>Aspergillus</taxon>
        <taxon>Aspergillus subgen. Circumdati</taxon>
    </lineage>
</organism>
<sequence length="285" mass="32568">MSVLRRRGALSLRELSLSTPVTVVSCRARSFSVNNRPPPKYPGHVPLNFVERGALAVGSAVGALLNPRRADLIAACGEATATPYFIYRLRDAMLSDPTGRQILRERPRITSETLPLPYLRSLPENSVGRTYAAWLDREGVSPDTRDNVQYIDDEECAYVMQRYRECHDFYHAVTGLPTFVEGEIALKAFEFLNTLIPMTGLSMFAAVRLKPAERERFFALWLPWAVRSGLASKELINVYWEKILEKDVDELRGELGIEKPPDMREIRRMIREQKKREKERLQQSA</sequence>
<gene>
    <name type="primary">coq4</name>
    <name type="ORF">AO090020000109</name>
</gene>
<name>COQ4_ASPOR</name>
<proteinExistence type="inferred from homology"/>
<reference key="1">
    <citation type="journal article" date="2005" name="Nature">
        <title>Genome sequencing and analysis of Aspergillus oryzae.</title>
        <authorList>
            <person name="Machida M."/>
            <person name="Asai K."/>
            <person name="Sano M."/>
            <person name="Tanaka T."/>
            <person name="Kumagai T."/>
            <person name="Terai G."/>
            <person name="Kusumoto K."/>
            <person name="Arima T."/>
            <person name="Akita O."/>
            <person name="Kashiwagi Y."/>
            <person name="Abe K."/>
            <person name="Gomi K."/>
            <person name="Horiuchi H."/>
            <person name="Kitamoto K."/>
            <person name="Kobayashi T."/>
            <person name="Takeuchi M."/>
            <person name="Denning D.W."/>
            <person name="Galagan J.E."/>
            <person name="Nierman W.C."/>
            <person name="Yu J."/>
            <person name="Archer D.B."/>
            <person name="Bennett J.W."/>
            <person name="Bhatnagar D."/>
            <person name="Cleveland T.E."/>
            <person name="Fedorova N.D."/>
            <person name="Gotoh O."/>
            <person name="Horikawa H."/>
            <person name="Hosoyama A."/>
            <person name="Ichinomiya M."/>
            <person name="Igarashi R."/>
            <person name="Iwashita K."/>
            <person name="Juvvadi P.R."/>
            <person name="Kato M."/>
            <person name="Kato Y."/>
            <person name="Kin T."/>
            <person name="Kokubun A."/>
            <person name="Maeda H."/>
            <person name="Maeyama N."/>
            <person name="Maruyama J."/>
            <person name="Nagasaki H."/>
            <person name="Nakajima T."/>
            <person name="Oda K."/>
            <person name="Okada K."/>
            <person name="Paulsen I."/>
            <person name="Sakamoto K."/>
            <person name="Sawano T."/>
            <person name="Takahashi M."/>
            <person name="Takase K."/>
            <person name="Terabayashi Y."/>
            <person name="Wortman J.R."/>
            <person name="Yamada O."/>
            <person name="Yamagata Y."/>
            <person name="Anazawa H."/>
            <person name="Hata Y."/>
            <person name="Koide Y."/>
            <person name="Komori T."/>
            <person name="Koyama Y."/>
            <person name="Minetoki T."/>
            <person name="Suharnan S."/>
            <person name="Tanaka A."/>
            <person name="Isono K."/>
            <person name="Kuhara S."/>
            <person name="Ogasawara N."/>
            <person name="Kikuchi H."/>
        </authorList>
    </citation>
    <scope>NUCLEOTIDE SEQUENCE [LARGE SCALE GENOMIC DNA]</scope>
    <source>
        <strain>ATCC 42149 / RIB 40</strain>
    </source>
</reference>
<protein>
    <recommendedName>
        <fullName evidence="1">Ubiquinone biosynthesis protein coq4, mitochondrial</fullName>
    </recommendedName>
    <alternativeName>
        <fullName>4-hydroxy-3-methoxy-5-polyprenylbenzoate decarboxylase</fullName>
        <ecNumber evidence="1">4.1.1.130</ecNumber>
    </alternativeName>
    <alternativeName>
        <fullName evidence="1">Coenzyme Q biosynthesis protein 4</fullName>
    </alternativeName>
</protein>
<dbReference type="EC" id="4.1.1.130" evidence="1"/>
<dbReference type="EMBL" id="BA000054">
    <property type="protein sequence ID" value="BAE63342.1"/>
    <property type="molecule type" value="Genomic_DNA"/>
</dbReference>
<dbReference type="SMR" id="Q2U523"/>
<dbReference type="STRING" id="510516.Q2U523"/>
<dbReference type="EnsemblFungi" id="BAE63342">
    <property type="protein sequence ID" value="BAE63342"/>
    <property type="gene ID" value="AO090020000109"/>
</dbReference>
<dbReference type="HOGENOM" id="CLU_061241_0_0_1"/>
<dbReference type="OMA" id="YYERHFH"/>
<dbReference type="UniPathway" id="UPA00232"/>
<dbReference type="Proteomes" id="UP000006564">
    <property type="component" value="Chromosome 6"/>
</dbReference>
<dbReference type="GO" id="GO:0031314">
    <property type="term" value="C:extrinsic component of mitochondrial inner membrane"/>
    <property type="evidence" value="ECO:0007669"/>
    <property type="project" value="UniProtKB-UniRule"/>
</dbReference>
<dbReference type="GO" id="GO:0006744">
    <property type="term" value="P:ubiquinone biosynthetic process"/>
    <property type="evidence" value="ECO:0007669"/>
    <property type="project" value="UniProtKB-UniRule"/>
</dbReference>
<dbReference type="HAMAP" id="MF_03111">
    <property type="entry name" value="Coq4"/>
    <property type="match status" value="1"/>
</dbReference>
<dbReference type="InterPro" id="IPR007715">
    <property type="entry name" value="Coq4"/>
</dbReference>
<dbReference type="InterPro" id="IPR027540">
    <property type="entry name" value="Coq4_euk"/>
</dbReference>
<dbReference type="PANTHER" id="PTHR12922">
    <property type="entry name" value="UBIQUINONE BIOSYNTHESIS PROTEIN"/>
    <property type="match status" value="1"/>
</dbReference>
<dbReference type="PANTHER" id="PTHR12922:SF7">
    <property type="entry name" value="UBIQUINONE BIOSYNTHESIS PROTEIN COQ4 HOMOLOG, MITOCHONDRIAL"/>
    <property type="match status" value="1"/>
</dbReference>
<dbReference type="Pfam" id="PF05019">
    <property type="entry name" value="Coq4"/>
    <property type="match status" value="1"/>
</dbReference>
<comment type="function">
    <text evidence="1">Lyase that catalyzes the C1-decarboxylation of 4-hydroxy-3-methoxy-5-(all-trans-polyprenyl)benzoic acid into 2-methoxy-6-(all-trans-polyprenyl)phenol during ubiquinone biosynthesis.</text>
</comment>
<comment type="catalytic activity">
    <reaction evidence="1">
        <text>a 4-hydroxy-3-methoxy-5-(all-trans-polyprenyl)benzoate + H(+) = a 2-methoxy-6-(all-trans-polyprenyl)phenol + CO2</text>
        <dbReference type="Rhea" id="RHEA:81179"/>
        <dbReference type="Rhea" id="RHEA-COMP:9551"/>
        <dbReference type="Rhea" id="RHEA-COMP:10931"/>
        <dbReference type="ChEBI" id="CHEBI:15378"/>
        <dbReference type="ChEBI" id="CHEBI:16526"/>
        <dbReference type="ChEBI" id="CHEBI:62731"/>
        <dbReference type="ChEBI" id="CHEBI:84443"/>
        <dbReference type="EC" id="4.1.1.130"/>
    </reaction>
</comment>
<comment type="cofactor">
    <cofactor evidence="1">
        <name>Zn(2+)</name>
        <dbReference type="ChEBI" id="CHEBI:29105"/>
    </cofactor>
</comment>
<comment type="pathway">
    <text evidence="1">Cofactor biosynthesis; ubiquinone biosynthesis.</text>
</comment>
<comment type="subunit">
    <text evidence="1">Component of a multi-subunit COQ enzyme complex, composed of at least coq3, coq4, coq5, coq6, coq7 and coq9.</text>
</comment>
<comment type="subcellular location">
    <subcellularLocation>
        <location evidence="1">Mitochondrion inner membrane</location>
        <topology evidence="1">Peripheral membrane protein</topology>
        <orientation evidence="1">Matrix side</orientation>
    </subcellularLocation>
</comment>
<comment type="similarity">
    <text evidence="1">Belongs to the COQ4 family.</text>
</comment>
<accession>Q2U523</accession>
<feature type="transit peptide" description="Mitochondrion" evidence="1">
    <location>
        <begin position="1"/>
        <end position="38"/>
    </location>
</feature>
<feature type="chain" id="PRO_0000388099" description="Ubiquinone biosynthesis protein coq4, mitochondrial">
    <location>
        <begin position="39"/>
        <end position="285"/>
    </location>
</feature>
<feature type="binding site" evidence="1">
    <location>
        <position position="167"/>
    </location>
    <ligand>
        <name>Zn(2+)</name>
        <dbReference type="ChEBI" id="CHEBI:29105"/>
    </ligand>
</feature>
<feature type="binding site" evidence="1">
    <location>
        <position position="168"/>
    </location>
    <ligand>
        <name>Zn(2+)</name>
        <dbReference type="ChEBI" id="CHEBI:29105"/>
    </ligand>
</feature>
<feature type="binding site" evidence="1">
    <location>
        <position position="171"/>
    </location>
    <ligand>
        <name>Zn(2+)</name>
        <dbReference type="ChEBI" id="CHEBI:29105"/>
    </ligand>
</feature>
<feature type="binding site" evidence="1">
    <location>
        <position position="183"/>
    </location>
    <ligand>
        <name>Zn(2+)</name>
        <dbReference type="ChEBI" id="CHEBI:29105"/>
    </ligand>
</feature>
<keyword id="KW-0456">Lyase</keyword>
<keyword id="KW-0472">Membrane</keyword>
<keyword id="KW-0479">Metal-binding</keyword>
<keyword id="KW-0496">Mitochondrion</keyword>
<keyword id="KW-0999">Mitochondrion inner membrane</keyword>
<keyword id="KW-1185">Reference proteome</keyword>
<keyword id="KW-0809">Transit peptide</keyword>
<keyword id="KW-0831">Ubiquinone biosynthesis</keyword>
<keyword id="KW-0862">Zinc</keyword>